<comment type="cofactor">
    <cofactor evidence="1">
        <name>thiamine diphosphate</name>
        <dbReference type="ChEBI" id="CHEBI:58937"/>
    </cofactor>
</comment>
<comment type="similarity">
    <text evidence="1">Belongs to the XFP family.</text>
</comment>
<organism>
    <name type="scientific">Nostoc sp. (strain PCC 7120 / SAG 25.82 / UTEX 2576)</name>
    <dbReference type="NCBI Taxonomy" id="103690"/>
    <lineage>
        <taxon>Bacteria</taxon>
        <taxon>Bacillati</taxon>
        <taxon>Cyanobacteriota</taxon>
        <taxon>Cyanophyceae</taxon>
        <taxon>Nostocales</taxon>
        <taxon>Nostocaceae</taxon>
        <taxon>Nostoc</taxon>
    </lineage>
</organism>
<dbReference type="EC" id="4.1.2.-"/>
<dbReference type="EMBL" id="BA000019">
    <property type="protein sequence ID" value="BAB74266.1"/>
    <property type="molecule type" value="Genomic_DNA"/>
</dbReference>
<dbReference type="PIR" id="AH2126">
    <property type="entry name" value="AH2126"/>
</dbReference>
<dbReference type="RefSeq" id="WP_010996723.1">
    <property type="nucleotide sequence ID" value="NZ_RSCN01000002.1"/>
</dbReference>
<dbReference type="SMR" id="Q8YTZ6"/>
<dbReference type="STRING" id="103690.gene:10494598"/>
<dbReference type="KEGG" id="ana:all2567"/>
<dbReference type="eggNOG" id="COG3957">
    <property type="taxonomic scope" value="Bacteria"/>
</dbReference>
<dbReference type="OrthoDB" id="9768449at2"/>
<dbReference type="Proteomes" id="UP000002483">
    <property type="component" value="Chromosome"/>
</dbReference>
<dbReference type="GO" id="GO:0016832">
    <property type="term" value="F:aldehyde-lyase activity"/>
    <property type="evidence" value="ECO:0007669"/>
    <property type="project" value="UniProtKB-UniRule"/>
</dbReference>
<dbReference type="GO" id="GO:0005975">
    <property type="term" value="P:carbohydrate metabolic process"/>
    <property type="evidence" value="ECO:0007669"/>
    <property type="project" value="InterPro"/>
</dbReference>
<dbReference type="CDD" id="cd02011">
    <property type="entry name" value="TPP_PK"/>
    <property type="match status" value="1"/>
</dbReference>
<dbReference type="FunFam" id="3.40.50.970:FF:000091">
    <property type="entry name" value="Xylulose-5-phosphate/fructose-6-phosphate phosphoketolase"/>
    <property type="match status" value="1"/>
</dbReference>
<dbReference type="Gene3D" id="3.40.50.920">
    <property type="match status" value="1"/>
</dbReference>
<dbReference type="Gene3D" id="3.40.50.970">
    <property type="match status" value="2"/>
</dbReference>
<dbReference type="HAMAP" id="MF_01403">
    <property type="entry name" value="Phosphoketolase"/>
    <property type="match status" value="1"/>
</dbReference>
<dbReference type="InterPro" id="IPR023962">
    <property type="entry name" value="Phosphoketolase"/>
</dbReference>
<dbReference type="InterPro" id="IPR029061">
    <property type="entry name" value="THDP-binding"/>
</dbReference>
<dbReference type="InterPro" id="IPR009014">
    <property type="entry name" value="Transketo_C/PFOR_II"/>
</dbReference>
<dbReference type="InterPro" id="IPR005593">
    <property type="entry name" value="Xul5P/Fru6P_PKetolase"/>
</dbReference>
<dbReference type="InterPro" id="IPR018969">
    <property type="entry name" value="Xul5P/Fru6P_PKetolase_C"/>
</dbReference>
<dbReference type="InterPro" id="IPR019790">
    <property type="entry name" value="Xul5P/Fru6P_PKetolase_CS"/>
</dbReference>
<dbReference type="InterPro" id="IPR018970">
    <property type="entry name" value="Xul5P/Fru6P_PKetolase_N"/>
</dbReference>
<dbReference type="InterPro" id="IPR019789">
    <property type="entry name" value="Xul5P/Fru6P_PKetolase_ThDP_BS"/>
</dbReference>
<dbReference type="NCBIfam" id="NF003616">
    <property type="entry name" value="PRK05261.1-1"/>
    <property type="match status" value="1"/>
</dbReference>
<dbReference type="NCBIfam" id="NF003617">
    <property type="entry name" value="PRK05261.1-2"/>
    <property type="match status" value="1"/>
</dbReference>
<dbReference type="NCBIfam" id="NF003619">
    <property type="entry name" value="PRK05261.1-4"/>
    <property type="match status" value="1"/>
</dbReference>
<dbReference type="NCBIfam" id="NF003621">
    <property type="entry name" value="PRK05261.1-6"/>
    <property type="match status" value="1"/>
</dbReference>
<dbReference type="PANTHER" id="PTHR31273">
    <property type="entry name" value="PHOSPHOKETOLASE-RELATED"/>
    <property type="match status" value="1"/>
</dbReference>
<dbReference type="PANTHER" id="PTHR31273:SF0">
    <property type="entry name" value="PHOSPHOKETOLASE-RELATED"/>
    <property type="match status" value="1"/>
</dbReference>
<dbReference type="Pfam" id="PF03894">
    <property type="entry name" value="XFP"/>
    <property type="match status" value="1"/>
</dbReference>
<dbReference type="Pfam" id="PF09363">
    <property type="entry name" value="XFP_C"/>
    <property type="match status" value="1"/>
</dbReference>
<dbReference type="Pfam" id="PF09364">
    <property type="entry name" value="XFP_N"/>
    <property type="match status" value="1"/>
</dbReference>
<dbReference type="PIRSF" id="PIRSF017245">
    <property type="entry name" value="Phosphoketolase"/>
    <property type="match status" value="1"/>
</dbReference>
<dbReference type="SUPFAM" id="SSF52518">
    <property type="entry name" value="Thiamin diphosphate-binding fold (THDP-binding)"/>
    <property type="match status" value="2"/>
</dbReference>
<dbReference type="PROSITE" id="PS60002">
    <property type="entry name" value="PHOSPHOKETOLASE_1"/>
    <property type="match status" value="1"/>
</dbReference>
<dbReference type="PROSITE" id="PS60003">
    <property type="entry name" value="PHOSPHOKETOLASE_2"/>
    <property type="match status" value="1"/>
</dbReference>
<gene>
    <name type="ordered locus">all2567</name>
</gene>
<accession>Q8YTZ6</accession>
<proteinExistence type="inferred from homology"/>
<keyword id="KW-0456">Lyase</keyword>
<keyword id="KW-1185">Reference proteome</keyword>
<keyword id="KW-0786">Thiamine pyrophosphate</keyword>
<feature type="chain" id="PRO_0000193870" description="Probable phosphoketolase 2">
    <location>
        <begin position="1"/>
        <end position="793"/>
    </location>
</feature>
<reference key="1">
    <citation type="journal article" date="2001" name="DNA Res.">
        <title>Complete genomic sequence of the filamentous nitrogen-fixing cyanobacterium Anabaena sp. strain PCC 7120.</title>
        <authorList>
            <person name="Kaneko T."/>
            <person name="Nakamura Y."/>
            <person name="Wolk C.P."/>
            <person name="Kuritz T."/>
            <person name="Sasamoto S."/>
            <person name="Watanabe A."/>
            <person name="Iriguchi M."/>
            <person name="Ishikawa A."/>
            <person name="Kawashima K."/>
            <person name="Kimura T."/>
            <person name="Kishida Y."/>
            <person name="Kohara M."/>
            <person name="Matsumoto M."/>
            <person name="Matsuno A."/>
            <person name="Muraki A."/>
            <person name="Nakazaki N."/>
            <person name="Shimpo S."/>
            <person name="Sugimoto M."/>
            <person name="Takazawa M."/>
            <person name="Yamada M."/>
            <person name="Yasuda M."/>
            <person name="Tabata S."/>
        </authorList>
    </citation>
    <scope>NUCLEOTIDE SEQUENCE [LARGE SCALE GENOMIC DNA]</scope>
    <source>
        <strain>PCC 7120 / SAG 25.82 / UTEX 2576</strain>
    </source>
</reference>
<name>PHK2_NOSS1</name>
<evidence type="ECO:0000305" key="1"/>
<sequence length="793" mass="89583">MTLASPPQIKPLTDEELHKINAYWRAANYLSVGQIYLLDNPLLREPLNKEHVKPRLLGHWGTTPGLNFIYVHLNRIIKKYDQSMVYIAGPGHGGPGLVANTYLEGTYSEYYPNISQDAGGMQKLFKQFSFPGGIPSHVAPETPGSIHEGGELGYALVHAFGAAFDNPDLIVAAVVGDGEAETGALATSWHSNKFLNPASDGAVLPILHLNGYKIANPTVLARLSYEELESLFVGYGYKPYFVEGSDPALVHQQMAAILDTVIAEIHSIQREARVHGFSKRPQWPMIILRTPKGWTGPKEVDGKKTEDYWRSHQVPFGNVTGNPEHLKLLEEWLKSYKPEELFDANGKLIPELAELAPKGDRRMGDNPHANGGILLRDLVMPDFQNYAIEVPQPGRVMAEATQVTGKFLRDVMKLNLDSRNFRVFGPDETASNRINAVLDVTDRTWVAQKLPEDDHLDPSGRVMEILSETCCQGWLEGYLLTGRHGFFSCYEAFIHIIDSMFNQHAKWLKTTRHISWRRPVASLNYLLTSHVWRQDHNGFSHQDPGFIDHVVNKKSEIIRVYLPPDANTLLSVTDHCLRSRNYVNVIVAGKQPALQFLDMDAAVKHCTKGIGIWEWASNDQGSEPDVVMACAGDVPTLETLAAVDILRQHFPDLKVRVVNVVDLMTLQPKTEHPHGLNPKDFETIFTTDKPIIFAFHGYPWLIHRLTYRQPNHNNLHVRGYKEEGTTTTPFDMVVLNDLDRFHLVMDVIDRVPKLGYKAAYVKQQLQDKLIEHKHYISQHGEDMPDISDWQWPY</sequence>
<protein>
    <recommendedName>
        <fullName>Probable phosphoketolase 2</fullName>
        <ecNumber>4.1.2.-</ecNumber>
    </recommendedName>
</protein>